<feature type="chain" id="PRO_0000231734" description="Imidazole glycerol phosphate synthase subunit HisH">
    <location>
        <begin position="1"/>
        <end position="217"/>
    </location>
</feature>
<feature type="domain" description="Glutamine amidotransferase type-1" evidence="1">
    <location>
        <begin position="3"/>
        <end position="217"/>
    </location>
</feature>
<feature type="active site" description="Nucleophile" evidence="1">
    <location>
        <position position="82"/>
    </location>
</feature>
<feature type="active site" evidence="1">
    <location>
        <position position="193"/>
    </location>
</feature>
<feature type="active site" evidence="1">
    <location>
        <position position="195"/>
    </location>
</feature>
<reference key="1">
    <citation type="journal article" date="2004" name="PLoS Biol.">
        <title>Genomic insights into methanotrophy: the complete genome sequence of Methylococcus capsulatus (Bath).</title>
        <authorList>
            <person name="Ward N.L."/>
            <person name="Larsen O."/>
            <person name="Sakwa J."/>
            <person name="Bruseth L."/>
            <person name="Khouri H.M."/>
            <person name="Durkin A.S."/>
            <person name="Dimitrov G."/>
            <person name="Jiang L."/>
            <person name="Scanlan D."/>
            <person name="Kang K.H."/>
            <person name="Lewis M.R."/>
            <person name="Nelson K.E."/>
            <person name="Methe B.A."/>
            <person name="Wu M."/>
            <person name="Heidelberg J.F."/>
            <person name="Paulsen I.T."/>
            <person name="Fouts D.E."/>
            <person name="Ravel J."/>
            <person name="Tettelin H."/>
            <person name="Ren Q."/>
            <person name="Read T.D."/>
            <person name="DeBoy R.T."/>
            <person name="Seshadri R."/>
            <person name="Salzberg S.L."/>
            <person name="Jensen H.B."/>
            <person name="Birkeland N.K."/>
            <person name="Nelson W.C."/>
            <person name="Dodson R.J."/>
            <person name="Grindhaug S.H."/>
            <person name="Holt I.E."/>
            <person name="Eidhammer I."/>
            <person name="Jonasen I."/>
            <person name="Vanaken S."/>
            <person name="Utterback T.R."/>
            <person name="Feldblyum T.V."/>
            <person name="Fraser C.M."/>
            <person name="Lillehaug J.R."/>
            <person name="Eisen J.A."/>
        </authorList>
    </citation>
    <scope>NUCLEOTIDE SEQUENCE [LARGE SCALE GENOMIC DNA]</scope>
    <source>
        <strain>ATCC 33009 / NCIMB 11132 / Bath</strain>
    </source>
</reference>
<gene>
    <name evidence="1" type="primary">hisH</name>
    <name type="ordered locus">MCA2804</name>
</gene>
<sequence>MSSVAVIDYGMGNLHSIAKALQHADANAAVTVTSDPDVILASDRVVFPGVGAMRDCMAHLAERRLEQVVRRAAAEKPFLGICLGMQALLEESEENGGTRCLGLITGRVLRFPEGLTGAAGEPLKIPHMGWNRVHFSDPSHPLWAGIPAESWFYFVHSYYAAPADPADVAATSDYPTPFAAAVARGKVFAVQFHPEKSQAAGLRLLANFLRWEPWSSR</sequence>
<protein>
    <recommendedName>
        <fullName evidence="1">Imidazole glycerol phosphate synthase subunit HisH</fullName>
        <ecNumber evidence="1">4.3.2.10</ecNumber>
    </recommendedName>
    <alternativeName>
        <fullName evidence="1">IGP synthase glutaminase subunit</fullName>
        <ecNumber evidence="1">3.5.1.2</ecNumber>
    </alternativeName>
    <alternativeName>
        <fullName evidence="1">IGP synthase subunit HisH</fullName>
    </alternativeName>
    <alternativeName>
        <fullName evidence="1">ImGP synthase subunit HisH</fullName>
        <shortName evidence="1">IGPS subunit HisH</shortName>
    </alternativeName>
</protein>
<dbReference type="EC" id="4.3.2.10" evidence="1"/>
<dbReference type="EC" id="3.5.1.2" evidence="1"/>
<dbReference type="EMBL" id="AE017282">
    <property type="protein sequence ID" value="AAU91069.1"/>
    <property type="molecule type" value="Genomic_DNA"/>
</dbReference>
<dbReference type="RefSeq" id="WP_010962005.1">
    <property type="nucleotide sequence ID" value="NC_002977.6"/>
</dbReference>
<dbReference type="SMR" id="Q603K1"/>
<dbReference type="STRING" id="243233.MCA2804"/>
<dbReference type="GeneID" id="88224980"/>
<dbReference type="KEGG" id="mca:MCA2804"/>
<dbReference type="eggNOG" id="COG0118">
    <property type="taxonomic scope" value="Bacteria"/>
</dbReference>
<dbReference type="HOGENOM" id="CLU_071837_2_0_6"/>
<dbReference type="UniPathway" id="UPA00031">
    <property type="reaction ID" value="UER00010"/>
</dbReference>
<dbReference type="Proteomes" id="UP000006821">
    <property type="component" value="Chromosome"/>
</dbReference>
<dbReference type="GO" id="GO:0005737">
    <property type="term" value="C:cytoplasm"/>
    <property type="evidence" value="ECO:0007669"/>
    <property type="project" value="UniProtKB-SubCell"/>
</dbReference>
<dbReference type="GO" id="GO:0004359">
    <property type="term" value="F:glutaminase activity"/>
    <property type="evidence" value="ECO:0007669"/>
    <property type="project" value="UniProtKB-EC"/>
</dbReference>
<dbReference type="GO" id="GO:0000107">
    <property type="term" value="F:imidazoleglycerol-phosphate synthase activity"/>
    <property type="evidence" value="ECO:0007669"/>
    <property type="project" value="UniProtKB-UniRule"/>
</dbReference>
<dbReference type="GO" id="GO:0016829">
    <property type="term" value="F:lyase activity"/>
    <property type="evidence" value="ECO:0007669"/>
    <property type="project" value="UniProtKB-KW"/>
</dbReference>
<dbReference type="GO" id="GO:0000105">
    <property type="term" value="P:L-histidine biosynthetic process"/>
    <property type="evidence" value="ECO:0007669"/>
    <property type="project" value="UniProtKB-UniRule"/>
</dbReference>
<dbReference type="CDD" id="cd01748">
    <property type="entry name" value="GATase1_IGP_Synthase"/>
    <property type="match status" value="1"/>
</dbReference>
<dbReference type="FunFam" id="3.40.50.880:FF:000023">
    <property type="entry name" value="Imidazole glycerol phosphate synthase subunit HisH"/>
    <property type="match status" value="1"/>
</dbReference>
<dbReference type="Gene3D" id="3.40.50.880">
    <property type="match status" value="1"/>
</dbReference>
<dbReference type="HAMAP" id="MF_00278">
    <property type="entry name" value="HisH"/>
    <property type="match status" value="1"/>
</dbReference>
<dbReference type="InterPro" id="IPR029062">
    <property type="entry name" value="Class_I_gatase-like"/>
</dbReference>
<dbReference type="InterPro" id="IPR017926">
    <property type="entry name" value="GATASE"/>
</dbReference>
<dbReference type="InterPro" id="IPR010139">
    <property type="entry name" value="Imidazole-glycPsynth_HisH"/>
</dbReference>
<dbReference type="NCBIfam" id="TIGR01855">
    <property type="entry name" value="IMP_synth_hisH"/>
    <property type="match status" value="1"/>
</dbReference>
<dbReference type="PANTHER" id="PTHR42701">
    <property type="entry name" value="IMIDAZOLE GLYCEROL PHOSPHATE SYNTHASE SUBUNIT HISH"/>
    <property type="match status" value="1"/>
</dbReference>
<dbReference type="PANTHER" id="PTHR42701:SF1">
    <property type="entry name" value="IMIDAZOLE GLYCEROL PHOSPHATE SYNTHASE SUBUNIT HISH"/>
    <property type="match status" value="1"/>
</dbReference>
<dbReference type="Pfam" id="PF00117">
    <property type="entry name" value="GATase"/>
    <property type="match status" value="1"/>
</dbReference>
<dbReference type="PIRSF" id="PIRSF000495">
    <property type="entry name" value="Amidotransf_hisH"/>
    <property type="match status" value="1"/>
</dbReference>
<dbReference type="SUPFAM" id="SSF52317">
    <property type="entry name" value="Class I glutamine amidotransferase-like"/>
    <property type="match status" value="1"/>
</dbReference>
<dbReference type="PROSITE" id="PS51273">
    <property type="entry name" value="GATASE_TYPE_1"/>
    <property type="match status" value="1"/>
</dbReference>
<accession>Q603K1</accession>
<proteinExistence type="inferred from homology"/>
<name>HIS5_METCA</name>
<evidence type="ECO:0000255" key="1">
    <source>
        <dbReference type="HAMAP-Rule" id="MF_00278"/>
    </source>
</evidence>
<comment type="function">
    <text evidence="1">IGPS catalyzes the conversion of PRFAR and glutamine to IGP, AICAR and glutamate. The HisH subunit catalyzes the hydrolysis of glutamine to glutamate and ammonia as part of the synthesis of IGP and AICAR. The resulting ammonia molecule is channeled to the active site of HisF.</text>
</comment>
<comment type="catalytic activity">
    <reaction evidence="1">
        <text>5-[(5-phospho-1-deoxy-D-ribulos-1-ylimino)methylamino]-1-(5-phospho-beta-D-ribosyl)imidazole-4-carboxamide + L-glutamine = D-erythro-1-(imidazol-4-yl)glycerol 3-phosphate + 5-amino-1-(5-phospho-beta-D-ribosyl)imidazole-4-carboxamide + L-glutamate + H(+)</text>
        <dbReference type="Rhea" id="RHEA:24793"/>
        <dbReference type="ChEBI" id="CHEBI:15378"/>
        <dbReference type="ChEBI" id="CHEBI:29985"/>
        <dbReference type="ChEBI" id="CHEBI:58278"/>
        <dbReference type="ChEBI" id="CHEBI:58359"/>
        <dbReference type="ChEBI" id="CHEBI:58475"/>
        <dbReference type="ChEBI" id="CHEBI:58525"/>
        <dbReference type="EC" id="4.3.2.10"/>
    </reaction>
</comment>
<comment type="catalytic activity">
    <reaction evidence="1">
        <text>L-glutamine + H2O = L-glutamate + NH4(+)</text>
        <dbReference type="Rhea" id="RHEA:15889"/>
        <dbReference type="ChEBI" id="CHEBI:15377"/>
        <dbReference type="ChEBI" id="CHEBI:28938"/>
        <dbReference type="ChEBI" id="CHEBI:29985"/>
        <dbReference type="ChEBI" id="CHEBI:58359"/>
        <dbReference type="EC" id="3.5.1.2"/>
    </reaction>
</comment>
<comment type="pathway">
    <text evidence="1">Amino-acid biosynthesis; L-histidine biosynthesis; L-histidine from 5-phospho-alpha-D-ribose 1-diphosphate: step 5/9.</text>
</comment>
<comment type="subunit">
    <text evidence="1">Heterodimer of HisH and HisF.</text>
</comment>
<comment type="subcellular location">
    <subcellularLocation>
        <location evidence="1">Cytoplasm</location>
    </subcellularLocation>
</comment>
<keyword id="KW-0028">Amino-acid biosynthesis</keyword>
<keyword id="KW-0963">Cytoplasm</keyword>
<keyword id="KW-0315">Glutamine amidotransferase</keyword>
<keyword id="KW-0368">Histidine biosynthesis</keyword>
<keyword id="KW-0378">Hydrolase</keyword>
<keyword id="KW-0456">Lyase</keyword>
<keyword id="KW-1185">Reference proteome</keyword>
<organism>
    <name type="scientific">Methylococcus capsulatus (strain ATCC 33009 / NCIMB 11132 / Bath)</name>
    <dbReference type="NCBI Taxonomy" id="243233"/>
    <lineage>
        <taxon>Bacteria</taxon>
        <taxon>Pseudomonadati</taxon>
        <taxon>Pseudomonadota</taxon>
        <taxon>Gammaproteobacteria</taxon>
        <taxon>Methylococcales</taxon>
        <taxon>Methylococcaceae</taxon>
        <taxon>Methylococcus</taxon>
    </lineage>
</organism>